<name>PB2_INCAA</name>
<feature type="chain" id="PRO_0000269454" description="Polymerase basic protein 2">
    <location>
        <begin position="1"/>
        <end position="774"/>
    </location>
</feature>
<feature type="sequence conflict" description="In Ref. 1; AAB01664." ref="1">
    <original>M</original>
    <variation>I</variation>
    <location>
        <position position="266"/>
    </location>
</feature>
<feature type="sequence conflict" description="In Ref. 1; AAB01664." ref="1">
    <original>P</original>
    <variation>Q</variation>
    <location>
        <position position="330"/>
    </location>
</feature>
<comment type="function">
    <text evidence="1">Plays an essential role in transcription initiation and cap-stealing mechanism, in which cellular capped pre-mRNAs are used to generate primers for viral transcription. Recognizes and binds a wide range of cap structures of target pre-RNAs which are subsequently cleaved after 10-13 nucleotides by the viral protein PA. Plays a role in the initiation of the viral genome replication and modulates the activity of the ribonucleoprotein (RNP) complex.</text>
</comment>
<comment type="subunit">
    <text evidence="1">Influenza RNA polymerase is composed of three subunits: PB1, PB2 and PA. Interacts (via N-terminus) with PB1 (via C-terminus). Interacts with nucleoprotein NP (via N-terminus).</text>
</comment>
<comment type="subcellular location">
    <subcellularLocation>
        <location evidence="1">Virion</location>
    </subcellularLocation>
    <subcellularLocation>
        <location evidence="1">Host nucleus</location>
    </subcellularLocation>
</comment>
<comment type="similarity">
    <text evidence="1">Belongs to the influenza viruses PB2 family.</text>
</comment>
<sequence>MSFLLTIAKEYKRLCQDAKAAQMMTVGTVSNYTTFKKWTTSRKEKNPSLRMRWAMSSKFPIIANKRMLEEAQIPKEHNNVALWEDTEDVSKRDHVLASASCINYWNFCGPCVNNSEVIKEVYKSRFGRLERRKEIMWKELRFTLVDRQRRRVDTQPVEQRLRTGEIKDLQMWTLFEDEAPLASKFILDNYGLVKEMRSKFANKPLNKEVVAHMLEKQFNPESRFLPVFGAIRPERMELIHALGGETWIQEANTAGISNVDQRKNDMRAVCRKVCLAANASIMNAKSKLVEYIKSTSMRIGETERKLEELILETDDVSPEVTLCKSALGGPLGKTLSFGPMLLKKISGSGVKVKDTVYIQGVRAVQFEYWSEQEEFYGEYKSATALFSRKERSLEWITIGGGINEDRKRLLAMCMIFCRDGDYFKDAPATITMADLSTKLGREIPYQYVMMNWIQKSEDNLEALLYSRGIVETNPGKMGSSMGIDGSKRAIKSLRAVTIQSGKIDMPESKEKIHLELSDNLEAFDSSGRIVATILDLPSDKKVTFQDVSFQHPDLAVLRDEKTAITKGYEALIKRLGTGDNDIPSLIAKKDYLSLYNLPEVKLMAPLIRPNRKGVYSRVARKLVSTQVTTGHYSLHELIKVLPFTYFAPKQGMFEGRLFFSNDSFVEPGVNNNVFSWSKADSSKIYCHGIAIRVPLVVGDEHMDTSLALLEGFSVCENDPRAPMVTRQDLIDVGFGQKVRLFVGQGSVRTFKRTASQRAASSDVNKNVKKIKMSN</sequence>
<protein>
    <recommendedName>
        <fullName evidence="1">Polymerase basic protein 2</fullName>
    </recommendedName>
    <alternativeName>
        <fullName evidence="1">RNA-directed RNA polymerase subunit P3</fullName>
    </alternativeName>
</protein>
<dbReference type="EMBL" id="U20228">
    <property type="protein sequence ID" value="AAB01664.1"/>
    <property type="molecule type" value="Genomic_RNA"/>
</dbReference>
<dbReference type="EMBL" id="AB126191">
    <property type="protein sequence ID" value="BAD24937.1"/>
    <property type="molecule type" value="Genomic_RNA"/>
</dbReference>
<dbReference type="RefSeq" id="YP_089652.1">
    <property type="nucleotide sequence ID" value="NC_006307.2"/>
</dbReference>
<dbReference type="SMR" id="Q6I7C4"/>
<dbReference type="DNASU" id="3077363"/>
<dbReference type="GeneID" id="3077363"/>
<dbReference type="KEGG" id="vg:3077363"/>
<dbReference type="OrthoDB" id="431at10239"/>
<dbReference type="Proteomes" id="UP000008286">
    <property type="component" value="Genome"/>
</dbReference>
<dbReference type="GO" id="GO:0042025">
    <property type="term" value="C:host cell nucleus"/>
    <property type="evidence" value="ECO:0007669"/>
    <property type="project" value="UniProtKB-SubCell"/>
</dbReference>
<dbReference type="GO" id="GO:0044423">
    <property type="term" value="C:virion component"/>
    <property type="evidence" value="ECO:0007669"/>
    <property type="project" value="UniProtKB-UniRule"/>
</dbReference>
<dbReference type="GO" id="GO:0003723">
    <property type="term" value="F:RNA binding"/>
    <property type="evidence" value="ECO:0007669"/>
    <property type="project" value="UniProtKB-UniRule"/>
</dbReference>
<dbReference type="GO" id="GO:0003968">
    <property type="term" value="F:RNA-directed RNA polymerase activity"/>
    <property type="evidence" value="ECO:0007669"/>
    <property type="project" value="UniProtKB-UniRule"/>
</dbReference>
<dbReference type="GO" id="GO:0006370">
    <property type="term" value="P:7-methylguanosine mRNA capping"/>
    <property type="evidence" value="ECO:0007669"/>
    <property type="project" value="UniProtKB-UniRule"/>
</dbReference>
<dbReference type="GO" id="GO:0075526">
    <property type="term" value="P:cap snatching"/>
    <property type="evidence" value="ECO:0007669"/>
    <property type="project" value="UniProtKB-UniRule"/>
</dbReference>
<dbReference type="GO" id="GO:0006351">
    <property type="term" value="P:DNA-templated transcription"/>
    <property type="evidence" value="ECO:0007669"/>
    <property type="project" value="UniProtKB-UniRule"/>
</dbReference>
<dbReference type="GO" id="GO:0039657">
    <property type="term" value="P:symbiont-mediated suppression of host gene expression"/>
    <property type="evidence" value="ECO:0007669"/>
    <property type="project" value="UniProtKB-KW"/>
</dbReference>
<dbReference type="GO" id="GO:0039523">
    <property type="term" value="P:symbiont-mediated suppression of host mRNA transcription via inhibition of RNA polymerase II activity"/>
    <property type="evidence" value="ECO:0007669"/>
    <property type="project" value="UniProtKB-UniRule"/>
</dbReference>
<dbReference type="GO" id="GO:0039694">
    <property type="term" value="P:viral RNA genome replication"/>
    <property type="evidence" value="ECO:0007669"/>
    <property type="project" value="InterPro"/>
</dbReference>
<dbReference type="HAMAP" id="MF_04062">
    <property type="entry name" value="INV_PB2"/>
    <property type="match status" value="1"/>
</dbReference>
<dbReference type="InterPro" id="IPR049110">
    <property type="entry name" value="Flu_PB2_2nd"/>
</dbReference>
<dbReference type="InterPro" id="IPR049114">
    <property type="entry name" value="Flu_PB2_6th"/>
</dbReference>
<dbReference type="InterPro" id="IPR049115">
    <property type="entry name" value="Flu_PB2_C"/>
</dbReference>
<dbReference type="InterPro" id="IPR048298">
    <property type="entry name" value="Flu_PB2_CAP-bd"/>
</dbReference>
<dbReference type="InterPro" id="IPR049111">
    <property type="entry name" value="Flu_PB2_middle"/>
</dbReference>
<dbReference type="InterPro" id="IPR049106">
    <property type="entry name" value="Flu_PB2_N"/>
</dbReference>
<dbReference type="InterPro" id="IPR001591">
    <property type="entry name" value="INV_PB2"/>
</dbReference>
<dbReference type="InterPro" id="IPR049113">
    <property type="entry name" value="PB2_helical"/>
</dbReference>
<dbReference type="Pfam" id="PF20947">
    <property type="entry name" value="Flu_PB2_1st"/>
    <property type="match status" value="1"/>
</dbReference>
<dbReference type="Pfam" id="PF20948">
    <property type="entry name" value="Flu_PB2_2nd"/>
    <property type="match status" value="1"/>
</dbReference>
<dbReference type="Pfam" id="PF20949">
    <property type="entry name" value="Flu_PB2_3rd"/>
    <property type="match status" value="1"/>
</dbReference>
<dbReference type="Pfam" id="PF20950">
    <property type="entry name" value="Flu_PB2_4th"/>
    <property type="match status" value="1"/>
</dbReference>
<dbReference type="Pfam" id="PF00604">
    <property type="entry name" value="Flu_PB2_5th"/>
    <property type="match status" value="1"/>
</dbReference>
<dbReference type="Pfam" id="PF20951">
    <property type="entry name" value="Flu_PB2_6th"/>
    <property type="match status" value="1"/>
</dbReference>
<dbReference type="Pfam" id="PF20952">
    <property type="entry name" value="Flu_PB2_7th"/>
    <property type="match status" value="1"/>
</dbReference>
<evidence type="ECO:0000255" key="1">
    <source>
        <dbReference type="HAMAP-Rule" id="MF_04062"/>
    </source>
</evidence>
<accession>Q6I7C4</accession>
<accession>Q82668</accession>
<keyword id="KW-1157">Cap snatching</keyword>
<keyword id="KW-1262">Eukaryotic host gene expression shutoff by virus</keyword>
<keyword id="KW-1191">Eukaryotic host transcription shutoff by virus</keyword>
<keyword id="KW-1190">Host gene expression shutoff by virus</keyword>
<keyword id="KW-1048">Host nucleus</keyword>
<keyword id="KW-0945">Host-virus interaction</keyword>
<keyword id="KW-1104">Inhibition of host RNA polymerase II by virus</keyword>
<keyword id="KW-0506">mRNA capping</keyword>
<keyword id="KW-0507">mRNA processing</keyword>
<keyword id="KW-1185">Reference proteome</keyword>
<keyword id="KW-1195">Viral transcription</keyword>
<keyword id="KW-0946">Virion</keyword>
<organism>
    <name type="scientific">Influenza C virus (strain C/Ann Arbor/1/1950)</name>
    <dbReference type="NCBI Taxonomy" id="11553"/>
    <lineage>
        <taxon>Viruses</taxon>
        <taxon>Riboviria</taxon>
        <taxon>Orthornavirae</taxon>
        <taxon>Negarnaviricota</taxon>
        <taxon>Polyploviricotina</taxon>
        <taxon>Insthoviricetes</taxon>
        <taxon>Articulavirales</taxon>
        <taxon>Orthomyxoviridae</taxon>
        <taxon>Gammainfluenzavirus</taxon>
        <taxon>Gammainfluenzavirus influenzae</taxon>
        <taxon>Influenza C virus</taxon>
    </lineage>
</organism>
<organismHost>
    <name type="scientific">Homo sapiens</name>
    <name type="common">Human</name>
    <dbReference type="NCBI Taxonomy" id="9606"/>
</organismHost>
<organismHost>
    <name type="scientific">Sus scrofa</name>
    <name type="common">Pig</name>
    <dbReference type="NCBI Taxonomy" id="9823"/>
</organismHost>
<proteinExistence type="inferred from homology"/>
<reference key="1">
    <citation type="journal article" date="1995" name="Virus Res.">
        <title>The persistent variant of influenza C virus carries one characteristic point mutation in RNA segment 1.</title>
        <authorList>
            <person name="Lapatschek M.S."/>
            <person name="Marschall M."/>
            <person name="Meier-Ewert H."/>
        </authorList>
    </citation>
    <scope>NUCLEOTIDE SEQUENCE [GENOMIC RNA]</scope>
</reference>
<reference key="2">
    <citation type="journal article" date="2004" name="J. Gen. Virol.">
        <title>Identification of an amino acid residue on influenza C virus M1 protein responsible for formation of the cord-like structures of the virus.</title>
        <authorList>
            <person name="Muraki Y."/>
            <person name="Washioka H."/>
            <person name="Sugawara K."/>
            <person name="Matsuzaki Y."/>
            <person name="Takashita E."/>
            <person name="Hongo S."/>
        </authorList>
    </citation>
    <scope>NUCLEOTIDE SEQUENCE [GENOMIC RNA]</scope>
</reference>
<gene>
    <name evidence="1" type="primary">PB2</name>
</gene>